<feature type="chain" id="PRO_0000247893" description="G-protein coupled receptor 84">
    <location>
        <begin position="1"/>
        <end position="396"/>
    </location>
</feature>
<feature type="topological domain" description="Extracellular" evidence="3">
    <location>
        <begin position="1"/>
        <end position="26"/>
    </location>
</feature>
<feature type="transmembrane region" description="Helical; Name=1" evidence="3">
    <location>
        <begin position="27"/>
        <end position="47"/>
    </location>
</feature>
<feature type="topological domain" description="Cytoplasmic" evidence="3">
    <location>
        <begin position="48"/>
        <end position="57"/>
    </location>
</feature>
<feature type="transmembrane region" description="Helical; Name=2" evidence="3">
    <location>
        <begin position="58"/>
        <end position="78"/>
    </location>
</feature>
<feature type="topological domain" description="Extracellular" evidence="3">
    <location>
        <begin position="79"/>
        <end position="94"/>
    </location>
</feature>
<feature type="transmembrane region" description="Helical; Name=3" evidence="3">
    <location>
        <begin position="95"/>
        <end position="115"/>
    </location>
</feature>
<feature type="topological domain" description="Cytoplasmic" evidence="3">
    <location>
        <begin position="116"/>
        <end position="144"/>
    </location>
</feature>
<feature type="transmembrane region" description="Helical; Name=4" evidence="3">
    <location>
        <begin position="145"/>
        <end position="165"/>
    </location>
</feature>
<feature type="topological domain" description="Extracellular" evidence="3">
    <location>
        <begin position="166"/>
        <end position="180"/>
    </location>
</feature>
<feature type="transmembrane region" description="Helical; Name=5" evidence="3">
    <location>
        <begin position="181"/>
        <end position="201"/>
    </location>
</feature>
<feature type="topological domain" description="Cytoplasmic" evidence="3">
    <location>
        <begin position="202"/>
        <end position="320"/>
    </location>
</feature>
<feature type="transmembrane region" description="Helical; Name=6" evidence="3">
    <location>
        <begin position="321"/>
        <end position="341"/>
    </location>
</feature>
<feature type="topological domain" description="Extracellular" evidence="3">
    <location>
        <begin position="342"/>
        <end position="352"/>
    </location>
</feature>
<feature type="transmembrane region" description="Helical; Name=7" evidence="3">
    <location>
        <begin position="353"/>
        <end position="373"/>
    </location>
</feature>
<feature type="topological domain" description="Cytoplasmic" evidence="3">
    <location>
        <begin position="374"/>
        <end position="396"/>
    </location>
</feature>
<feature type="region of interest" description="Disordered" evidence="5">
    <location>
        <begin position="243"/>
        <end position="310"/>
    </location>
</feature>
<feature type="modified residue" description="Phosphoserine" evidence="1">
    <location>
        <position position="221"/>
    </location>
</feature>
<feature type="modified residue" description="Phosphoserine" evidence="1">
    <location>
        <position position="224"/>
    </location>
</feature>
<feature type="modified residue" description="Phosphothreonine" evidence="2">
    <location>
        <position position="263"/>
    </location>
</feature>
<feature type="modified residue" description="Phosphothreonine" evidence="2">
    <location>
        <position position="264"/>
    </location>
</feature>
<feature type="glycosylation site" description="N-linked (GlcNAc...) asparagine" evidence="3">
    <location>
        <position position="3"/>
    </location>
</feature>
<feature type="glycosylation site" description="N-linked (GlcNAc...) asparagine" evidence="3">
    <location>
        <position position="8"/>
    </location>
</feature>
<keyword id="KW-1003">Cell membrane</keyword>
<keyword id="KW-0297">G-protein coupled receptor</keyword>
<keyword id="KW-0325">Glycoprotein</keyword>
<keyword id="KW-0472">Membrane</keyword>
<keyword id="KW-0597">Phosphoprotein</keyword>
<keyword id="KW-0675">Receptor</keyword>
<keyword id="KW-1185">Reference proteome</keyword>
<keyword id="KW-0807">Transducer</keyword>
<keyword id="KW-0812">Transmembrane</keyword>
<keyword id="KW-1133">Transmembrane helix</keyword>
<gene>
    <name type="primary">GPR84</name>
</gene>
<name>GPR84_BOVIN</name>
<protein>
    <recommendedName>
        <fullName>G-protein coupled receptor 84</fullName>
    </recommendedName>
</protein>
<reference key="1">
    <citation type="journal article" date="2005" name="BMC Genomics">
        <title>Characterization of 954 bovine full-CDS cDNA sequences.</title>
        <authorList>
            <person name="Harhay G.P."/>
            <person name="Sonstegard T.S."/>
            <person name="Keele J.W."/>
            <person name="Heaton M.P."/>
            <person name="Clawson M.L."/>
            <person name="Snelling W.M."/>
            <person name="Wiedmann R.T."/>
            <person name="Van Tassell C.P."/>
            <person name="Smith T.P.L."/>
        </authorList>
    </citation>
    <scope>NUCLEOTIDE SEQUENCE [LARGE SCALE MRNA]</scope>
</reference>
<reference key="2">
    <citation type="submission" date="2006-01" db="EMBL/GenBank/DDBJ databases">
        <authorList>
            <consortium name="NIH - Mammalian Gene Collection (MGC) project"/>
        </authorList>
    </citation>
    <scope>NUCLEOTIDE SEQUENCE [LARGE SCALE MRNA]</scope>
    <source>
        <strain>Hereford</strain>
        <tissue>Heart ventricle</tissue>
    </source>
</reference>
<accession>Q2KI97</accession>
<accession>A5D964</accession>
<evidence type="ECO:0000250" key="1">
    <source>
        <dbReference type="UniProtKB" id="Q8CIM5"/>
    </source>
</evidence>
<evidence type="ECO:0000250" key="2">
    <source>
        <dbReference type="UniProtKB" id="Q9NQS5"/>
    </source>
</evidence>
<evidence type="ECO:0000255" key="3"/>
<evidence type="ECO:0000255" key="4">
    <source>
        <dbReference type="PROSITE-ProRule" id="PRU00521"/>
    </source>
</evidence>
<evidence type="ECO:0000256" key="5">
    <source>
        <dbReference type="SAM" id="MobiDB-lite"/>
    </source>
</evidence>
<proteinExistence type="evidence at transcript level"/>
<dbReference type="EMBL" id="BT030483">
    <property type="protein sequence ID" value="ABQ12923.1"/>
    <property type="molecule type" value="mRNA"/>
</dbReference>
<dbReference type="EMBL" id="BC112718">
    <property type="protein sequence ID" value="AAI12719.1"/>
    <property type="molecule type" value="mRNA"/>
</dbReference>
<dbReference type="SMR" id="Q2KI97"/>
<dbReference type="FunCoup" id="Q2KI97">
    <property type="interactions" value="43"/>
</dbReference>
<dbReference type="STRING" id="9913.ENSBTAP00000020710"/>
<dbReference type="GlyCosmos" id="Q2KI97">
    <property type="glycosylation" value="2 sites, No reported glycans"/>
</dbReference>
<dbReference type="GlyGen" id="Q2KI97">
    <property type="glycosylation" value="2 sites"/>
</dbReference>
<dbReference type="PaxDb" id="9913-ENSBTAP00000020710"/>
<dbReference type="Ensembl" id="ENSBTAT00000020710.5">
    <property type="protein sequence ID" value="ENSBTAP00000020710.3"/>
    <property type="gene ID" value="ENSBTAG00000015592.5"/>
</dbReference>
<dbReference type="Ensembl" id="ENSBTAT00000111340.1">
    <property type="protein sequence ID" value="ENSBTAP00000101567.1"/>
    <property type="gene ID" value="ENSBTAG00000015592.5"/>
</dbReference>
<dbReference type="Ensembl" id="ENSBTAT00000118581.1">
    <property type="protein sequence ID" value="ENSBTAP00000085265.1"/>
    <property type="gene ID" value="ENSBTAG00000015592.5"/>
</dbReference>
<dbReference type="Ensembl" id="ENSBTAT00000125199.1">
    <property type="protein sequence ID" value="ENSBTAP00000093569.1"/>
    <property type="gene ID" value="ENSBTAG00000015592.5"/>
</dbReference>
<dbReference type="Ensembl" id="ENSBTAT00000126841.1">
    <property type="protein sequence ID" value="ENSBTAP00000086819.1"/>
    <property type="gene ID" value="ENSBTAG00000015592.5"/>
</dbReference>
<dbReference type="VEuPathDB" id="HostDB:ENSBTAG00000015592"/>
<dbReference type="VGNC" id="VGNC:29601">
    <property type="gene designation" value="GPR84"/>
</dbReference>
<dbReference type="eggNOG" id="KOG3656">
    <property type="taxonomic scope" value="Eukaryota"/>
</dbReference>
<dbReference type="GeneTree" id="ENSGT00390000009609"/>
<dbReference type="HOGENOM" id="CLU_009579_3_10_1"/>
<dbReference type="InParanoid" id="Q2KI97"/>
<dbReference type="OMA" id="RRVTRMC"/>
<dbReference type="OrthoDB" id="6117944at2759"/>
<dbReference type="TreeFam" id="TF333474"/>
<dbReference type="Reactome" id="R-BTA-418555">
    <property type="pathway name" value="G alpha (s) signalling events"/>
</dbReference>
<dbReference type="Reactome" id="R-BTA-6798695">
    <property type="pathway name" value="Neutrophil degranulation"/>
</dbReference>
<dbReference type="Proteomes" id="UP000009136">
    <property type="component" value="Chromosome 5"/>
</dbReference>
<dbReference type="GO" id="GO:0005886">
    <property type="term" value="C:plasma membrane"/>
    <property type="evidence" value="ECO:0000318"/>
    <property type="project" value="GO_Central"/>
</dbReference>
<dbReference type="GO" id="GO:0001604">
    <property type="term" value="F:urotensin II receptor activity"/>
    <property type="evidence" value="ECO:0000318"/>
    <property type="project" value="GO_Central"/>
</dbReference>
<dbReference type="GO" id="GO:0007218">
    <property type="term" value="P:neuropeptide signaling pathway"/>
    <property type="evidence" value="ECO:0000318"/>
    <property type="project" value="GO_Central"/>
</dbReference>
<dbReference type="CDD" id="cd15210">
    <property type="entry name" value="7tmA_GPR84-like"/>
    <property type="match status" value="1"/>
</dbReference>
<dbReference type="Gene3D" id="1.20.1070.10">
    <property type="entry name" value="Rhodopsin 7-helix transmembrane proteins"/>
    <property type="match status" value="1"/>
</dbReference>
<dbReference type="InterPro" id="IPR000276">
    <property type="entry name" value="GPCR_Rhodpsn"/>
</dbReference>
<dbReference type="InterPro" id="IPR017452">
    <property type="entry name" value="GPCR_Rhodpsn_7TM"/>
</dbReference>
<dbReference type="PANTHER" id="PTHR24230">
    <property type="entry name" value="G-PROTEIN COUPLED RECEPTOR"/>
    <property type="match status" value="1"/>
</dbReference>
<dbReference type="PANTHER" id="PTHR24230:SF59">
    <property type="entry name" value="G-PROTEIN COUPLED RECEPTOR 84"/>
    <property type="match status" value="1"/>
</dbReference>
<dbReference type="Pfam" id="PF00001">
    <property type="entry name" value="7tm_1"/>
    <property type="match status" value="1"/>
</dbReference>
<dbReference type="PRINTS" id="PR00237">
    <property type="entry name" value="GPCRRHODOPSN"/>
</dbReference>
<dbReference type="SMART" id="SM01381">
    <property type="entry name" value="7TM_GPCR_Srsx"/>
    <property type="match status" value="1"/>
</dbReference>
<dbReference type="SUPFAM" id="SSF81321">
    <property type="entry name" value="Family A G protein-coupled receptor-like"/>
    <property type="match status" value="1"/>
</dbReference>
<dbReference type="PROSITE" id="PS50262">
    <property type="entry name" value="G_PROTEIN_RECEP_F1_2"/>
    <property type="match status" value="1"/>
</dbReference>
<sequence>MWNASDVNFSCYHESVLGYRYVAVSWGIVVAVTGTVGNVLTLLALAIQPKLRTRFNLLIANLTVADLLYCTLLQPFSVDTYLHLHWRTGATFCQIFGFLLFVSNSVSILTLCLIALGRYLLIAHPKLFPQVFSAKGIVLALVSTWVVAVASFAPLWPIYILVPVVCTCSFDRIRGQPYTTILMGIYFVVGLSSVGVFYCLIHQQVKRAAQAMNQYKLRQASIRSNHVAGAHEAVPGRFQELDSGLASGGPSEGISSEPVSAATTQTLEGDSSEVRDQSNSKAAKQMAEKNPPGVAAKARTTKGAQRAQDSPSEFGKVTRMCFAVFLCFTLSYIPFLLLNILDAKVQAPRVVHMLAANLTWLNGCINPVLYAAMNRQFRQAYGSLLRRGPQSFHRFH</sequence>
<organism>
    <name type="scientific">Bos taurus</name>
    <name type="common">Bovine</name>
    <dbReference type="NCBI Taxonomy" id="9913"/>
    <lineage>
        <taxon>Eukaryota</taxon>
        <taxon>Metazoa</taxon>
        <taxon>Chordata</taxon>
        <taxon>Craniata</taxon>
        <taxon>Vertebrata</taxon>
        <taxon>Euteleostomi</taxon>
        <taxon>Mammalia</taxon>
        <taxon>Eutheria</taxon>
        <taxon>Laurasiatheria</taxon>
        <taxon>Artiodactyla</taxon>
        <taxon>Ruminantia</taxon>
        <taxon>Pecora</taxon>
        <taxon>Bovidae</taxon>
        <taxon>Bovinae</taxon>
        <taxon>Bos</taxon>
    </lineage>
</organism>
<comment type="function">
    <text evidence="1 2">G protein-coupled receptor that responds endogenously to dietary fatty acids or nutrient, specifically medium-chain free fatty acid (FFA) with carbon chain lengths of C9 to C14. Capric acid (C10:0), undecanoic acid (C11:0) and lauric acid (C12:0) are the most potent agonists (By similarity). In immune cells, functions as a pro-inflammatory receptor via 6-OAU and promotes the expression of pro-inflammatory mediators such as TNFalpha, IL-6 and IL-12B as well as stimulating chemotactic responses through activation of signaling mediators AKT, ERK and NF-kappa-B (By similarity). In addition, triggers increased bacterial adhesion and phagocytosis in macrophages and regulates pro-inflammatory function via enhancing NLRP3 inflammasome activation (By similarity). Also plays an important role in inflammation by modulating neutrophil functions (By similarity). Mechanistically, promotes neutrophil chemotaxis, reactive oxygen species (ROS) production and degranulation via LYN-AKT/ERK pathway (By similarity). To regulate ROS, communicates with the two formyl peptide receptors FPR2 and FPR1 to control the NADPH oxidase activity in neutrophils (By similarity).</text>
</comment>
<comment type="subunit">
    <text evidence="2">Interacts with ARRB2 and ARR3.</text>
</comment>
<comment type="subcellular location">
    <subcellularLocation>
        <location evidence="2">Cell membrane</location>
        <topology evidence="2">Multi-pass membrane protein</topology>
    </subcellularLocation>
</comment>
<comment type="PTM">
    <text evidence="2">Phosphorylated by a subset of GPR84-activating ligands. Constitutively phosphorylated at Ser-221 and Ser-224 in the absence of 2-HTP. By contrast, Thr-263 and Thr-264 are phosphorylated only following prior cell treatment with 2-HTP.</text>
</comment>
<comment type="similarity">
    <text evidence="4">Belongs to the G-protein coupled receptor 1 family.</text>
</comment>